<organism>
    <name type="scientific">Buchnera aphidicola subsp. Baizongia pistaciae (strain Bp)</name>
    <dbReference type="NCBI Taxonomy" id="224915"/>
    <lineage>
        <taxon>Bacteria</taxon>
        <taxon>Pseudomonadati</taxon>
        <taxon>Pseudomonadota</taxon>
        <taxon>Gammaproteobacteria</taxon>
        <taxon>Enterobacterales</taxon>
        <taxon>Erwiniaceae</taxon>
        <taxon>Buchnera</taxon>
    </lineage>
</organism>
<proteinExistence type="inferred from homology"/>
<sequence>MFIKILPLSTSSYISAGEVICNPASVVKELMENSIDSSATCIHIEIKKGGLQSIVVKDNGCGIDKSDLKASLLHHATSKIYSVCDLNNITTLGFRGEALASISAVSRIILSSCNISSKKVGWSIYSDGFGVISVPKLVVHNKGTICTVLDLFFNRPVRQKTIKSEYSEFLRIDEIVRSLSLSNNKLSVSLRHNDKLIRYYDNCNIDFCNINMLNAIYGLSSVIKVVPVDYFLNTMKITGWLYLLGSYHTSKKKFQYFYINGRIILNRSVHHAVYQAVSEINHYQYSVSYILYLKLNCNELDVNIHPAKKIIKIINIRLIHVFICQAILYSLKKECILKKDCTKIIKNISNNKKKNNLNYNFQSNLDITSCIVQENSYSIPQKLFNLDNVSIIETELKFKRFKCKDYLNTIFGNVLMVIKNFYLLIEKNDELFLFFLPRAKSLICELKLKFGVKNGLLIKKLRKKYFYFFKNNTEYHFFLRFYEILSHVGLNFNITLKYAELNSIPFMIDDTNLGIIISEILYFFKIKREMSLSRLVTTIMNHSKILVKYWDHLQVLSVISECEKYYKSILELNVISYILQPINFDSTVNFFKNDSKV</sequence>
<comment type="function">
    <text evidence="1">This protein is involved in the repair of mismatches in DNA. It is required for dam-dependent methyl-directed DNA mismatch repair. May act as a 'molecular matchmaker', a protein that promotes the formation of a stable complex between two or more DNA-binding proteins in an ATP-dependent manner without itself being part of a final effector complex (By similarity).</text>
</comment>
<comment type="similarity">
    <text evidence="2">Belongs to the DNA mismatch repair MutL/HexB family.</text>
</comment>
<feature type="chain" id="PRO_0000177933" description="DNA mismatch repair protein MutL">
    <location>
        <begin position="1"/>
        <end position="597"/>
    </location>
</feature>
<evidence type="ECO:0000250" key="1"/>
<evidence type="ECO:0000305" key="2"/>
<gene>
    <name type="primary">mutL</name>
    <name type="ordered locus">bbp_515</name>
</gene>
<reference key="1">
    <citation type="journal article" date="2003" name="Proc. Natl. Acad. Sci. U.S.A.">
        <title>Reductive genome evolution in Buchnera aphidicola.</title>
        <authorList>
            <person name="van Ham R.C.H.J."/>
            <person name="Kamerbeek J."/>
            <person name="Palacios C."/>
            <person name="Rausell C."/>
            <person name="Abascal F."/>
            <person name="Bastolla U."/>
            <person name="Fernandez J.M."/>
            <person name="Jimenez L."/>
            <person name="Postigo M."/>
            <person name="Silva F.J."/>
            <person name="Tamames J."/>
            <person name="Viguera E."/>
            <person name="Latorre A."/>
            <person name="Valencia A."/>
            <person name="Moran F."/>
            <person name="Moya A."/>
        </authorList>
    </citation>
    <scope>NUCLEOTIDE SEQUENCE [LARGE SCALE GENOMIC DNA]</scope>
    <source>
        <strain>Bp</strain>
    </source>
</reference>
<protein>
    <recommendedName>
        <fullName>DNA mismatch repair protein MutL</fullName>
    </recommendedName>
</protein>
<keyword id="KW-0227">DNA damage</keyword>
<keyword id="KW-0234">DNA repair</keyword>
<keyword id="KW-1185">Reference proteome</keyword>
<name>MUTL_BUCBP</name>
<dbReference type="EMBL" id="AE016826">
    <property type="protein sequence ID" value="AAO27218.1"/>
    <property type="molecule type" value="Genomic_DNA"/>
</dbReference>
<dbReference type="RefSeq" id="WP_011091619.1">
    <property type="nucleotide sequence ID" value="NC_004545.1"/>
</dbReference>
<dbReference type="SMR" id="Q89A38"/>
<dbReference type="STRING" id="224915.bbp_515"/>
<dbReference type="KEGG" id="bab:bbp_515"/>
<dbReference type="eggNOG" id="COG0323">
    <property type="taxonomic scope" value="Bacteria"/>
</dbReference>
<dbReference type="HOGENOM" id="CLU_004131_5_1_6"/>
<dbReference type="OrthoDB" id="9763467at2"/>
<dbReference type="Proteomes" id="UP000000601">
    <property type="component" value="Chromosome"/>
</dbReference>
<dbReference type="GO" id="GO:0032300">
    <property type="term" value="C:mismatch repair complex"/>
    <property type="evidence" value="ECO:0007669"/>
    <property type="project" value="InterPro"/>
</dbReference>
<dbReference type="GO" id="GO:0005524">
    <property type="term" value="F:ATP binding"/>
    <property type="evidence" value="ECO:0007669"/>
    <property type="project" value="InterPro"/>
</dbReference>
<dbReference type="GO" id="GO:0016887">
    <property type="term" value="F:ATP hydrolysis activity"/>
    <property type="evidence" value="ECO:0007669"/>
    <property type="project" value="InterPro"/>
</dbReference>
<dbReference type="GO" id="GO:0140664">
    <property type="term" value="F:ATP-dependent DNA damage sensor activity"/>
    <property type="evidence" value="ECO:0007669"/>
    <property type="project" value="InterPro"/>
</dbReference>
<dbReference type="GO" id="GO:0030983">
    <property type="term" value="F:mismatched DNA binding"/>
    <property type="evidence" value="ECO:0007669"/>
    <property type="project" value="InterPro"/>
</dbReference>
<dbReference type="GO" id="GO:0006298">
    <property type="term" value="P:mismatch repair"/>
    <property type="evidence" value="ECO:0007669"/>
    <property type="project" value="InterPro"/>
</dbReference>
<dbReference type="CDD" id="cd16926">
    <property type="entry name" value="HATPase_MutL-MLH-PMS-like"/>
    <property type="match status" value="1"/>
</dbReference>
<dbReference type="CDD" id="cd03482">
    <property type="entry name" value="MutL_Trans_MutL"/>
    <property type="match status" value="1"/>
</dbReference>
<dbReference type="FunFam" id="3.30.565.10:FF:000003">
    <property type="entry name" value="DNA mismatch repair endonuclease MutL"/>
    <property type="match status" value="1"/>
</dbReference>
<dbReference type="Gene3D" id="3.30.230.10">
    <property type="match status" value="1"/>
</dbReference>
<dbReference type="Gene3D" id="3.30.565.10">
    <property type="entry name" value="Histidine kinase-like ATPase, C-terminal domain"/>
    <property type="match status" value="1"/>
</dbReference>
<dbReference type="Gene3D" id="3.30.1540.20">
    <property type="entry name" value="MutL, C-terminal domain, dimerisation subdomain"/>
    <property type="match status" value="1"/>
</dbReference>
<dbReference type="Gene3D" id="3.30.1370.100">
    <property type="entry name" value="MutL, C-terminal domain, regulatory subdomain"/>
    <property type="match status" value="1"/>
</dbReference>
<dbReference type="InterPro" id="IPR014762">
    <property type="entry name" value="DNA_mismatch_repair_CS"/>
</dbReference>
<dbReference type="InterPro" id="IPR013507">
    <property type="entry name" value="DNA_mismatch_S5_2-like"/>
</dbReference>
<dbReference type="InterPro" id="IPR036890">
    <property type="entry name" value="HATPase_C_sf"/>
</dbReference>
<dbReference type="InterPro" id="IPR002099">
    <property type="entry name" value="MutL/Mlh/PMS"/>
</dbReference>
<dbReference type="InterPro" id="IPR038973">
    <property type="entry name" value="MutL/Mlh/Pms-like"/>
</dbReference>
<dbReference type="InterPro" id="IPR014790">
    <property type="entry name" value="MutL_C"/>
</dbReference>
<dbReference type="InterPro" id="IPR042120">
    <property type="entry name" value="MutL_C_dimsub"/>
</dbReference>
<dbReference type="InterPro" id="IPR042121">
    <property type="entry name" value="MutL_C_regsub"/>
</dbReference>
<dbReference type="InterPro" id="IPR037198">
    <property type="entry name" value="MutL_C_sf"/>
</dbReference>
<dbReference type="InterPro" id="IPR020568">
    <property type="entry name" value="Ribosomal_Su5_D2-typ_SF"/>
</dbReference>
<dbReference type="InterPro" id="IPR014721">
    <property type="entry name" value="Ribsml_uS5_D2-typ_fold_subgr"/>
</dbReference>
<dbReference type="NCBIfam" id="TIGR00585">
    <property type="entry name" value="mutl"/>
    <property type="match status" value="1"/>
</dbReference>
<dbReference type="PANTHER" id="PTHR10073">
    <property type="entry name" value="DNA MISMATCH REPAIR PROTEIN MLH, PMS, MUTL"/>
    <property type="match status" value="1"/>
</dbReference>
<dbReference type="PANTHER" id="PTHR10073:SF12">
    <property type="entry name" value="DNA MISMATCH REPAIR PROTEIN MLH1"/>
    <property type="match status" value="1"/>
</dbReference>
<dbReference type="Pfam" id="PF01119">
    <property type="entry name" value="DNA_mis_repair"/>
    <property type="match status" value="1"/>
</dbReference>
<dbReference type="Pfam" id="PF13589">
    <property type="entry name" value="HATPase_c_3"/>
    <property type="match status" value="1"/>
</dbReference>
<dbReference type="Pfam" id="PF08676">
    <property type="entry name" value="MutL_C"/>
    <property type="match status" value="1"/>
</dbReference>
<dbReference type="SMART" id="SM01340">
    <property type="entry name" value="DNA_mis_repair"/>
    <property type="match status" value="1"/>
</dbReference>
<dbReference type="SUPFAM" id="SSF55874">
    <property type="entry name" value="ATPase domain of HSP90 chaperone/DNA topoisomerase II/histidine kinase"/>
    <property type="match status" value="1"/>
</dbReference>
<dbReference type="SUPFAM" id="SSF118116">
    <property type="entry name" value="DNA mismatch repair protein MutL"/>
    <property type="match status" value="1"/>
</dbReference>
<dbReference type="SUPFAM" id="SSF54211">
    <property type="entry name" value="Ribosomal protein S5 domain 2-like"/>
    <property type="match status" value="1"/>
</dbReference>
<dbReference type="PROSITE" id="PS00058">
    <property type="entry name" value="DNA_MISMATCH_REPAIR_1"/>
    <property type="match status" value="1"/>
</dbReference>
<accession>Q89A38</accession>